<keyword id="KW-0067">ATP-binding</keyword>
<keyword id="KW-0414">Isoprene biosynthesis</keyword>
<keyword id="KW-0418">Kinase</keyword>
<keyword id="KW-0547">Nucleotide-binding</keyword>
<keyword id="KW-0808">Transferase</keyword>
<reference key="1">
    <citation type="journal article" date="2008" name="Antimicrob. Agents Chemother.">
        <title>Whole-genome pyrosequencing of an epidemic multidrug-resistant Acinetobacter baumannii strain belonging to the European clone II group.</title>
        <authorList>
            <person name="Iacono M."/>
            <person name="Villa L."/>
            <person name="Fortini D."/>
            <person name="Bordoni R."/>
            <person name="Imperi F."/>
            <person name="Bonnal R.J."/>
            <person name="Sicheritz-Ponten T."/>
            <person name="De Bellis G."/>
            <person name="Visca P."/>
            <person name="Cassone A."/>
            <person name="Carattoli A."/>
        </authorList>
    </citation>
    <scope>NUCLEOTIDE SEQUENCE [LARGE SCALE GENOMIC DNA]</scope>
    <source>
        <strain>ACICU</strain>
    </source>
</reference>
<feature type="chain" id="PRO_1000092054" description="4-diphosphocytidyl-2-C-methyl-D-erythritol kinase">
    <location>
        <begin position="1"/>
        <end position="277"/>
    </location>
</feature>
<feature type="active site" evidence="1">
    <location>
        <position position="9"/>
    </location>
</feature>
<feature type="active site" evidence="1">
    <location>
        <position position="133"/>
    </location>
</feature>
<feature type="binding site" evidence="1">
    <location>
        <begin position="91"/>
        <end position="101"/>
    </location>
    <ligand>
        <name>ATP</name>
        <dbReference type="ChEBI" id="CHEBI:30616"/>
    </ligand>
</feature>
<dbReference type="EC" id="2.7.1.148" evidence="1"/>
<dbReference type="EMBL" id="CP000863">
    <property type="protein sequence ID" value="ACC56100.1"/>
    <property type="molecule type" value="Genomic_DNA"/>
</dbReference>
<dbReference type="RefSeq" id="WP_000621866.1">
    <property type="nucleotide sequence ID" value="NZ_CP031380.1"/>
</dbReference>
<dbReference type="SMR" id="B2HUM5"/>
<dbReference type="GeneID" id="92892765"/>
<dbReference type="KEGG" id="abc:ACICU_00788"/>
<dbReference type="HOGENOM" id="CLU_053057_3_0_6"/>
<dbReference type="UniPathway" id="UPA00056">
    <property type="reaction ID" value="UER00094"/>
</dbReference>
<dbReference type="Proteomes" id="UP000008839">
    <property type="component" value="Chromosome"/>
</dbReference>
<dbReference type="GO" id="GO:0050515">
    <property type="term" value="F:4-(cytidine 5'-diphospho)-2-C-methyl-D-erythritol kinase activity"/>
    <property type="evidence" value="ECO:0007669"/>
    <property type="project" value="UniProtKB-UniRule"/>
</dbReference>
<dbReference type="GO" id="GO:0005524">
    <property type="term" value="F:ATP binding"/>
    <property type="evidence" value="ECO:0007669"/>
    <property type="project" value="UniProtKB-UniRule"/>
</dbReference>
<dbReference type="GO" id="GO:0019288">
    <property type="term" value="P:isopentenyl diphosphate biosynthetic process, methylerythritol 4-phosphate pathway"/>
    <property type="evidence" value="ECO:0007669"/>
    <property type="project" value="UniProtKB-UniRule"/>
</dbReference>
<dbReference type="GO" id="GO:0016114">
    <property type="term" value="P:terpenoid biosynthetic process"/>
    <property type="evidence" value="ECO:0007669"/>
    <property type="project" value="InterPro"/>
</dbReference>
<dbReference type="Gene3D" id="3.30.230.10">
    <property type="match status" value="1"/>
</dbReference>
<dbReference type="Gene3D" id="3.30.70.890">
    <property type="entry name" value="GHMP kinase, C-terminal domain"/>
    <property type="match status" value="1"/>
</dbReference>
<dbReference type="HAMAP" id="MF_00061">
    <property type="entry name" value="IspE"/>
    <property type="match status" value="1"/>
</dbReference>
<dbReference type="InterPro" id="IPR013750">
    <property type="entry name" value="GHMP_kinase_C_dom"/>
</dbReference>
<dbReference type="InterPro" id="IPR036554">
    <property type="entry name" value="GHMP_kinase_C_sf"/>
</dbReference>
<dbReference type="InterPro" id="IPR006204">
    <property type="entry name" value="GHMP_kinase_N_dom"/>
</dbReference>
<dbReference type="InterPro" id="IPR004424">
    <property type="entry name" value="IspE"/>
</dbReference>
<dbReference type="InterPro" id="IPR020568">
    <property type="entry name" value="Ribosomal_Su5_D2-typ_SF"/>
</dbReference>
<dbReference type="InterPro" id="IPR014721">
    <property type="entry name" value="Ribsml_uS5_D2-typ_fold_subgr"/>
</dbReference>
<dbReference type="NCBIfam" id="TIGR00154">
    <property type="entry name" value="ispE"/>
    <property type="match status" value="1"/>
</dbReference>
<dbReference type="PANTHER" id="PTHR43527">
    <property type="entry name" value="4-DIPHOSPHOCYTIDYL-2-C-METHYL-D-ERYTHRITOL KINASE, CHLOROPLASTIC"/>
    <property type="match status" value="1"/>
</dbReference>
<dbReference type="PANTHER" id="PTHR43527:SF2">
    <property type="entry name" value="4-DIPHOSPHOCYTIDYL-2-C-METHYL-D-ERYTHRITOL KINASE, CHLOROPLASTIC"/>
    <property type="match status" value="1"/>
</dbReference>
<dbReference type="Pfam" id="PF08544">
    <property type="entry name" value="GHMP_kinases_C"/>
    <property type="match status" value="1"/>
</dbReference>
<dbReference type="Pfam" id="PF00288">
    <property type="entry name" value="GHMP_kinases_N"/>
    <property type="match status" value="1"/>
</dbReference>
<dbReference type="PIRSF" id="PIRSF010376">
    <property type="entry name" value="IspE"/>
    <property type="match status" value="1"/>
</dbReference>
<dbReference type="SUPFAM" id="SSF55060">
    <property type="entry name" value="GHMP Kinase, C-terminal domain"/>
    <property type="match status" value="1"/>
</dbReference>
<dbReference type="SUPFAM" id="SSF54211">
    <property type="entry name" value="Ribosomal protein S5 domain 2-like"/>
    <property type="match status" value="1"/>
</dbReference>
<accession>B2HUM5</accession>
<gene>
    <name evidence="1" type="primary">ispE</name>
    <name type="ordered locus">ACICU_00788</name>
</gene>
<evidence type="ECO:0000255" key="1">
    <source>
        <dbReference type="HAMAP-Rule" id="MF_00061"/>
    </source>
</evidence>
<organism>
    <name type="scientific">Acinetobacter baumannii (strain ACICU)</name>
    <dbReference type="NCBI Taxonomy" id="405416"/>
    <lineage>
        <taxon>Bacteria</taxon>
        <taxon>Pseudomonadati</taxon>
        <taxon>Pseudomonadota</taxon>
        <taxon>Gammaproteobacteria</taxon>
        <taxon>Moraxellales</taxon>
        <taxon>Moraxellaceae</taxon>
        <taxon>Acinetobacter</taxon>
        <taxon>Acinetobacter calcoaceticus/baumannii complex</taxon>
    </lineage>
</organism>
<protein>
    <recommendedName>
        <fullName evidence="1">4-diphosphocytidyl-2-C-methyl-D-erythritol kinase</fullName>
        <shortName evidence="1">CMK</shortName>
        <ecNumber evidence="1">2.7.1.148</ecNumber>
    </recommendedName>
    <alternativeName>
        <fullName evidence="1">4-(cytidine-5'-diphospho)-2-C-methyl-D-erythritol kinase</fullName>
    </alternativeName>
</protein>
<sequence>MIRVPSPAKLNLFLHITGRRENGYHELQTIFQLIDLYDWMTFTPISEDEIQIEGLGEVQLEQNLIYRAAQILRPHAQNPCGLHIKIEKNIPMGAGLGGGSSNAATTLIVLNQLWQCGLTEEQLAQFGVKLGADVPIFIYGLNAWAEGIGEHLSFIDLDQKQFIVLKPDCFISTQLLFSQKTLTRDSKPTTFCAYQLEPSNFGNNFEPLARELYPEVEEAMQYLDQFGHAKLTGTGACVFAEVTDEMNVDDILKHAPCKAYLVHSLKESPLRHFKVAS</sequence>
<name>ISPE_ACIBC</name>
<comment type="function">
    <text evidence="1">Catalyzes the phosphorylation of the position 2 hydroxy group of 4-diphosphocytidyl-2C-methyl-D-erythritol.</text>
</comment>
<comment type="catalytic activity">
    <reaction evidence="1">
        <text>4-CDP-2-C-methyl-D-erythritol + ATP = 4-CDP-2-C-methyl-D-erythritol 2-phosphate + ADP + H(+)</text>
        <dbReference type="Rhea" id="RHEA:18437"/>
        <dbReference type="ChEBI" id="CHEBI:15378"/>
        <dbReference type="ChEBI" id="CHEBI:30616"/>
        <dbReference type="ChEBI" id="CHEBI:57823"/>
        <dbReference type="ChEBI" id="CHEBI:57919"/>
        <dbReference type="ChEBI" id="CHEBI:456216"/>
        <dbReference type="EC" id="2.7.1.148"/>
    </reaction>
</comment>
<comment type="pathway">
    <text evidence="1">Isoprenoid biosynthesis; isopentenyl diphosphate biosynthesis via DXP pathway; isopentenyl diphosphate from 1-deoxy-D-xylulose 5-phosphate: step 3/6.</text>
</comment>
<comment type="similarity">
    <text evidence="1">Belongs to the GHMP kinase family. IspE subfamily.</text>
</comment>
<proteinExistence type="inferred from homology"/>